<organism>
    <name type="scientific">Escherichia coli (strain K12)</name>
    <dbReference type="NCBI Taxonomy" id="83333"/>
    <lineage>
        <taxon>Bacteria</taxon>
        <taxon>Pseudomonadati</taxon>
        <taxon>Pseudomonadota</taxon>
        <taxon>Gammaproteobacteria</taxon>
        <taxon>Enterobacterales</taxon>
        <taxon>Enterobacteriaceae</taxon>
        <taxon>Escherichia</taxon>
    </lineage>
</organism>
<keyword id="KW-0997">Cell inner membrane</keyword>
<keyword id="KW-1003">Cell membrane</keyword>
<keyword id="KW-0472">Membrane</keyword>
<keyword id="KW-1185">Reference proteome</keyword>
<keyword id="KW-0812">Transmembrane</keyword>
<keyword id="KW-1133">Transmembrane helix</keyword>
<keyword id="KW-0813">Transport</keyword>
<evidence type="ECO:0000255" key="1"/>
<evidence type="ECO:0000255" key="2">
    <source>
        <dbReference type="PROSITE-ProRule" id="PRU00441"/>
    </source>
</evidence>
<evidence type="ECO:0000269" key="3">
    <source>
    </source>
</evidence>
<evidence type="ECO:0000269" key="4">
    <source>
    </source>
</evidence>
<evidence type="ECO:0000305" key="5"/>
<evidence type="ECO:0000305" key="6">
    <source>
    </source>
</evidence>
<proteinExistence type="evidence at protein level"/>
<name>SAPB_ECOLI</name>
<accession>P0AGH3</accession>
<accession>P76838</accession>
<accession>Q47623</accession>
<gene>
    <name type="primary">sapB</name>
    <name type="ordered locus">b1293</name>
    <name type="ordered locus">JW1286</name>
</gene>
<dbReference type="EMBL" id="X97282">
    <property type="protein sequence ID" value="CAA65938.1"/>
    <property type="molecule type" value="Genomic_DNA"/>
</dbReference>
<dbReference type="EMBL" id="U00096">
    <property type="protein sequence ID" value="AAC74375.1"/>
    <property type="molecule type" value="Genomic_DNA"/>
</dbReference>
<dbReference type="EMBL" id="AP009048">
    <property type="protein sequence ID" value="BAA14854.1"/>
    <property type="molecule type" value="Genomic_DNA"/>
</dbReference>
<dbReference type="PIR" id="H64877">
    <property type="entry name" value="H64877"/>
</dbReference>
<dbReference type="RefSeq" id="NP_415809.1">
    <property type="nucleotide sequence ID" value="NC_000913.3"/>
</dbReference>
<dbReference type="RefSeq" id="WP_000583277.1">
    <property type="nucleotide sequence ID" value="NZ_STEB01000005.1"/>
</dbReference>
<dbReference type="SMR" id="P0AGH3"/>
<dbReference type="BioGRID" id="4260136">
    <property type="interactions" value="262"/>
</dbReference>
<dbReference type="ComplexPortal" id="CPX-4422">
    <property type="entry name" value="Putative peptide ABC transporter"/>
</dbReference>
<dbReference type="FunCoup" id="P0AGH3">
    <property type="interactions" value="196"/>
</dbReference>
<dbReference type="STRING" id="511145.b1293"/>
<dbReference type="TCDB" id="3.A.1.5.42">
    <property type="family name" value="the atp-binding cassette (abc) superfamily"/>
</dbReference>
<dbReference type="jPOST" id="P0AGH3"/>
<dbReference type="PaxDb" id="511145-b1293"/>
<dbReference type="EnsemblBacteria" id="AAC74375">
    <property type="protein sequence ID" value="AAC74375"/>
    <property type="gene ID" value="b1293"/>
</dbReference>
<dbReference type="GeneID" id="93775418"/>
<dbReference type="GeneID" id="946191"/>
<dbReference type="KEGG" id="ecj:JW1286"/>
<dbReference type="KEGG" id="eco:b1293"/>
<dbReference type="KEGG" id="ecoc:C3026_07590"/>
<dbReference type="PATRIC" id="fig|1411691.4.peg.986"/>
<dbReference type="EchoBASE" id="EB4156"/>
<dbReference type="eggNOG" id="COG4168">
    <property type="taxonomic scope" value="Bacteria"/>
</dbReference>
<dbReference type="HOGENOM" id="CLU_036879_0_3_6"/>
<dbReference type="InParanoid" id="P0AGH3"/>
<dbReference type="OMA" id="WRHEMIV"/>
<dbReference type="OrthoDB" id="9805855at2"/>
<dbReference type="PhylomeDB" id="P0AGH3"/>
<dbReference type="BioCyc" id="EcoCyc:SAPB-MONOMER"/>
<dbReference type="BioCyc" id="MetaCyc:SAPB-MONOMER"/>
<dbReference type="BRENDA" id="7.6.2.11">
    <property type="organism ID" value="2026"/>
</dbReference>
<dbReference type="PRO" id="PR:P0AGH3"/>
<dbReference type="Proteomes" id="UP000000625">
    <property type="component" value="Chromosome"/>
</dbReference>
<dbReference type="GO" id="GO:0055052">
    <property type="term" value="C:ATP-binding cassette (ABC) transporter complex, substrate-binding subunit-containing"/>
    <property type="evidence" value="ECO:0000303"/>
    <property type="project" value="ComplexPortal"/>
</dbReference>
<dbReference type="GO" id="GO:0016020">
    <property type="term" value="C:membrane"/>
    <property type="evidence" value="ECO:0000303"/>
    <property type="project" value="ComplexPortal"/>
</dbReference>
<dbReference type="GO" id="GO:0005886">
    <property type="term" value="C:plasma membrane"/>
    <property type="evidence" value="ECO:0000314"/>
    <property type="project" value="EcoCyc"/>
</dbReference>
<dbReference type="GO" id="GO:0071916">
    <property type="term" value="F:dipeptide transmembrane transporter activity"/>
    <property type="evidence" value="ECO:0000318"/>
    <property type="project" value="GO_Central"/>
</dbReference>
<dbReference type="GO" id="GO:0015489">
    <property type="term" value="F:putrescine transmembrane transporter activity"/>
    <property type="evidence" value="ECO:0000315"/>
    <property type="project" value="EcoCyc"/>
</dbReference>
<dbReference type="GO" id="GO:0015833">
    <property type="term" value="P:peptide transport"/>
    <property type="evidence" value="ECO:0000303"/>
    <property type="project" value="ComplexPortal"/>
</dbReference>
<dbReference type="GO" id="GO:0015847">
    <property type="term" value="P:putrescine transport"/>
    <property type="evidence" value="ECO:0000315"/>
    <property type="project" value="EcoCyc"/>
</dbReference>
<dbReference type="CDD" id="cd06261">
    <property type="entry name" value="TM_PBP2"/>
    <property type="match status" value="1"/>
</dbReference>
<dbReference type="Gene3D" id="1.10.3720.10">
    <property type="entry name" value="MetI-like"/>
    <property type="match status" value="1"/>
</dbReference>
<dbReference type="InterPro" id="IPR000515">
    <property type="entry name" value="MetI-like"/>
</dbReference>
<dbReference type="InterPro" id="IPR035906">
    <property type="entry name" value="MetI-like_sf"/>
</dbReference>
<dbReference type="NCBIfam" id="NF011690">
    <property type="entry name" value="PRK15110.1"/>
    <property type="match status" value="1"/>
</dbReference>
<dbReference type="PANTHER" id="PTHR43163">
    <property type="entry name" value="DIPEPTIDE TRANSPORT SYSTEM PERMEASE PROTEIN DPPB-RELATED"/>
    <property type="match status" value="1"/>
</dbReference>
<dbReference type="PANTHER" id="PTHR43163:SF4">
    <property type="entry name" value="PUTRESCINE EXPORT SYSTEM PERMEASE PROTEIN SAPB"/>
    <property type="match status" value="1"/>
</dbReference>
<dbReference type="Pfam" id="PF00528">
    <property type="entry name" value="BPD_transp_1"/>
    <property type="match status" value="1"/>
</dbReference>
<dbReference type="SUPFAM" id="SSF161098">
    <property type="entry name" value="MetI-like"/>
    <property type="match status" value="1"/>
</dbReference>
<dbReference type="PROSITE" id="PS50928">
    <property type="entry name" value="ABC_TM1"/>
    <property type="match status" value="1"/>
</dbReference>
<reference key="1">
    <citation type="journal article" date="2001" name="Microbiology">
        <title>Identification of the ABC protein SapD as the subunit that confers ATP dependence to the K+-uptake systems Trk(H) and Trk(G) from Escherichia coli K-12.</title>
        <authorList>
            <person name="Harms C."/>
            <person name="Domoto Y."/>
            <person name="Celik C."/>
            <person name="Rahe E."/>
            <person name="Stumpe S."/>
            <person name="Schmid R."/>
            <person name="Nakamura T."/>
            <person name="Bakker E.P."/>
        </authorList>
    </citation>
    <scope>NUCLEOTIDE SEQUENCE [GENOMIC DNA]</scope>
    <source>
        <strain>K12 / FRAG5</strain>
    </source>
</reference>
<reference key="2">
    <citation type="journal article" date="1996" name="DNA Res.">
        <title>A 570-kb DNA sequence of the Escherichia coli K-12 genome corresponding to the 28.0-40.1 min region on the linkage map.</title>
        <authorList>
            <person name="Aiba H."/>
            <person name="Baba T."/>
            <person name="Fujita K."/>
            <person name="Hayashi K."/>
            <person name="Inada T."/>
            <person name="Isono K."/>
            <person name="Itoh T."/>
            <person name="Kasai H."/>
            <person name="Kashimoto K."/>
            <person name="Kimura S."/>
            <person name="Kitakawa M."/>
            <person name="Kitagawa M."/>
            <person name="Makino K."/>
            <person name="Miki T."/>
            <person name="Mizobuchi K."/>
            <person name="Mori H."/>
            <person name="Mori T."/>
            <person name="Motomura K."/>
            <person name="Nakade S."/>
            <person name="Nakamura Y."/>
            <person name="Nashimoto H."/>
            <person name="Nishio Y."/>
            <person name="Oshima T."/>
            <person name="Saito N."/>
            <person name="Sampei G."/>
            <person name="Seki Y."/>
            <person name="Sivasundaram S."/>
            <person name="Tagami H."/>
            <person name="Takeda J."/>
            <person name="Takemoto K."/>
            <person name="Takeuchi Y."/>
            <person name="Wada C."/>
            <person name="Yamamoto Y."/>
            <person name="Horiuchi T."/>
        </authorList>
    </citation>
    <scope>NUCLEOTIDE SEQUENCE [LARGE SCALE GENOMIC DNA]</scope>
    <source>
        <strain>K12 / W3110 / ATCC 27325 / DSM 5911</strain>
    </source>
</reference>
<reference key="3">
    <citation type="journal article" date="1997" name="Science">
        <title>The complete genome sequence of Escherichia coli K-12.</title>
        <authorList>
            <person name="Blattner F.R."/>
            <person name="Plunkett G. III"/>
            <person name="Bloch C.A."/>
            <person name="Perna N.T."/>
            <person name="Burland V."/>
            <person name="Riley M."/>
            <person name="Collado-Vides J."/>
            <person name="Glasner J.D."/>
            <person name="Rode C.K."/>
            <person name="Mayhew G.F."/>
            <person name="Gregor J."/>
            <person name="Davis N.W."/>
            <person name="Kirkpatrick H.A."/>
            <person name="Goeden M.A."/>
            <person name="Rose D.J."/>
            <person name="Mau B."/>
            <person name="Shao Y."/>
        </authorList>
    </citation>
    <scope>NUCLEOTIDE SEQUENCE [LARGE SCALE GENOMIC DNA]</scope>
    <source>
        <strain>K12 / MG1655 / ATCC 47076</strain>
    </source>
</reference>
<reference key="4">
    <citation type="journal article" date="2006" name="Mol. Syst. Biol.">
        <title>Highly accurate genome sequences of Escherichia coli K-12 strains MG1655 and W3110.</title>
        <authorList>
            <person name="Hayashi K."/>
            <person name="Morooka N."/>
            <person name="Yamamoto Y."/>
            <person name="Fujita K."/>
            <person name="Isono K."/>
            <person name="Choi S."/>
            <person name="Ohtsubo E."/>
            <person name="Baba T."/>
            <person name="Wanner B.L."/>
            <person name="Mori H."/>
            <person name="Horiuchi T."/>
        </authorList>
    </citation>
    <scope>NUCLEOTIDE SEQUENCE [LARGE SCALE GENOMIC DNA]</scope>
    <source>
        <strain>K12 / W3110 / ATCC 27325 / DSM 5911</strain>
    </source>
</reference>
<reference key="5">
    <citation type="journal article" date="2005" name="Science">
        <title>Global topology analysis of the Escherichia coli inner membrane proteome.</title>
        <authorList>
            <person name="Daley D.O."/>
            <person name="Rapp M."/>
            <person name="Granseth E."/>
            <person name="Melen K."/>
            <person name="Drew D."/>
            <person name="von Heijne G."/>
        </authorList>
    </citation>
    <scope>SUBCELLULAR LOCATION</scope>
    <scope>TOPOLOGY [LARGE SCALE ANALYSIS]</scope>
    <source>
        <strain>K12 / MG1655 / ATCC 47076</strain>
    </source>
</reference>
<reference key="6">
    <citation type="journal article" date="2016" name="J. Biol. Chem.">
        <title>A novel putrescine exporter SapBCDF of Escherichia coli.</title>
        <authorList>
            <person name="Sugiyama Y."/>
            <person name="Nakamura A."/>
            <person name="Matsumoto M."/>
            <person name="Kanbe A."/>
            <person name="Sakanaka M."/>
            <person name="Higashi K."/>
            <person name="Igarashi K."/>
            <person name="Katayama T."/>
            <person name="Suzuki H."/>
            <person name="Kurihara S."/>
        </authorList>
    </citation>
    <scope>FUNCTION IN PUTRESCINE EXPORT</scope>
    <scope>DISRUPTION PHENOTYPE</scope>
    <source>
        <strain>K12 / BW25113</strain>
        <strain>K12 / MG1655 / ATCC 47076</strain>
    </source>
</reference>
<comment type="function">
    <text evidence="4">Part of a putrescine export transport system, does not play a role in resistance to antimicrobial peptides.</text>
</comment>
<comment type="subcellular location">
    <subcellularLocation>
        <location evidence="3">Cell inner membrane</location>
        <topology evidence="6">Multi-pass membrane protein</topology>
    </subcellularLocation>
</comment>
<comment type="disruption phenotype">
    <text evidence="4">Single mutation, decreased extracellular putrescine, in an sapBCDF operon deletion no change in resistance to antimicrobial peptide LL-37. Operon deletion has no effect on growth, but if the putrescine importer PuuP is also deleted then growth is slower.</text>
</comment>
<comment type="similarity">
    <text evidence="5">Belongs to the binding-protein-dependent transport system permease family. OppBC subfamily.</text>
</comment>
<sequence>MIIFTLRRILLLIVTLFLLTFVGFSLSYFTPHAPLQGASLWNAWVFWFNGLIHWDFGVSSINGQPIAEQLKEVFPATMELCILAFGFALIVGIPVGMIAGITRHKWQDNLINAIALLGFSIPVFWLALLLTLFCSLTLGWLPVSGRFDLLYEVKPITGFALIDAWLSDSPWRDEMIMSAIRHMILPVITLSVAPTTEVIRLMRISTIEVYDQNYVKAAATRGLSRFTILRRHVLHNALPPVIPRLGLQFSTMLTLAMITEMVFSWPGLGRWLINAIRQQDYAAISAGVMVCGSLVIIVNVISDILGAMANPLKHKEWYALR</sequence>
<feature type="chain" id="PRO_0000060158" description="Putrescine export system permease protein SapB">
    <location>
        <begin position="1"/>
        <end position="321"/>
    </location>
</feature>
<feature type="topological domain" description="Cytoplasmic" evidence="1">
    <location>
        <begin position="1"/>
        <end position="8"/>
    </location>
</feature>
<feature type="transmembrane region" description="Helical" evidence="2">
    <location>
        <begin position="9"/>
        <end position="29"/>
    </location>
</feature>
<feature type="topological domain" description="Periplasmic" evidence="1">
    <location>
        <begin position="30"/>
        <end position="80"/>
    </location>
</feature>
<feature type="transmembrane region" description="Helical" evidence="2">
    <location>
        <begin position="81"/>
        <end position="101"/>
    </location>
</feature>
<feature type="topological domain" description="Cytoplasmic" evidence="1">
    <location>
        <begin position="102"/>
        <end position="112"/>
    </location>
</feature>
<feature type="transmembrane region" description="Helical" evidence="2">
    <location>
        <begin position="113"/>
        <end position="133"/>
    </location>
</feature>
<feature type="topological domain" description="Periplasmic" evidence="1">
    <location>
        <begin position="134"/>
        <end position="174"/>
    </location>
</feature>
<feature type="transmembrane region" description="Helical" evidence="2">
    <location>
        <begin position="175"/>
        <end position="195"/>
    </location>
</feature>
<feature type="topological domain" description="Cytoplasmic" evidence="1">
    <location>
        <begin position="196"/>
        <end position="248"/>
    </location>
</feature>
<feature type="transmembrane region" description="Helical" evidence="2">
    <location>
        <begin position="249"/>
        <end position="269"/>
    </location>
</feature>
<feature type="topological domain" description="Periplasmic" evidence="1">
    <location>
        <begin position="270"/>
        <end position="280"/>
    </location>
</feature>
<feature type="transmembrane region" description="Helical" evidence="2">
    <location>
        <begin position="281"/>
        <end position="301"/>
    </location>
</feature>
<feature type="topological domain" description="Cytoplasmic" evidence="1 4">
    <location>
        <begin position="302"/>
        <end position="321"/>
    </location>
</feature>
<feature type="domain" description="ABC transmembrane type-1" evidence="2">
    <location>
        <begin position="74"/>
        <end position="302"/>
    </location>
</feature>
<protein>
    <recommendedName>
        <fullName evidence="5">Putrescine export system permease protein SapB</fullName>
    </recommendedName>
</protein>